<reference key="1">
    <citation type="submission" date="2007-03" db="EMBL/GenBank/DDBJ databases">
        <title>Complete sequence of Desulfotomaculum reducens MI-1.</title>
        <authorList>
            <consortium name="US DOE Joint Genome Institute"/>
            <person name="Copeland A."/>
            <person name="Lucas S."/>
            <person name="Lapidus A."/>
            <person name="Barry K."/>
            <person name="Detter J.C."/>
            <person name="Glavina del Rio T."/>
            <person name="Hammon N."/>
            <person name="Israni S."/>
            <person name="Dalin E."/>
            <person name="Tice H."/>
            <person name="Pitluck S."/>
            <person name="Sims D."/>
            <person name="Brettin T."/>
            <person name="Bruce D."/>
            <person name="Han C."/>
            <person name="Tapia R."/>
            <person name="Schmutz J."/>
            <person name="Larimer F."/>
            <person name="Land M."/>
            <person name="Hauser L."/>
            <person name="Kyrpides N."/>
            <person name="Kim E."/>
            <person name="Tebo B.M."/>
            <person name="Richardson P."/>
        </authorList>
    </citation>
    <scope>NUCLEOTIDE SEQUENCE [LARGE SCALE GENOMIC DNA]</scope>
    <source>
        <strain>ATCC BAA-1160 / DSM 100696 / MI-1</strain>
    </source>
</reference>
<proteinExistence type="inferred from homology"/>
<protein>
    <recommendedName>
        <fullName evidence="1">Large ribosomal subunit protein bL19</fullName>
    </recommendedName>
    <alternativeName>
        <fullName evidence="2">50S ribosomal protein L19</fullName>
    </alternativeName>
</protein>
<evidence type="ECO:0000255" key="1">
    <source>
        <dbReference type="HAMAP-Rule" id="MF_00402"/>
    </source>
</evidence>
<evidence type="ECO:0000305" key="2"/>
<dbReference type="EMBL" id="CP000612">
    <property type="protein sequence ID" value="ABO50567.1"/>
    <property type="molecule type" value="Genomic_DNA"/>
</dbReference>
<dbReference type="RefSeq" id="WP_011878373.1">
    <property type="nucleotide sequence ID" value="NC_009253.1"/>
</dbReference>
<dbReference type="SMR" id="A4J664"/>
<dbReference type="STRING" id="349161.Dred_2050"/>
<dbReference type="KEGG" id="drm:Dred_2050"/>
<dbReference type="eggNOG" id="COG0335">
    <property type="taxonomic scope" value="Bacteria"/>
</dbReference>
<dbReference type="HOGENOM" id="CLU_103507_2_1_9"/>
<dbReference type="OrthoDB" id="9803541at2"/>
<dbReference type="Proteomes" id="UP000001556">
    <property type="component" value="Chromosome"/>
</dbReference>
<dbReference type="GO" id="GO:0022625">
    <property type="term" value="C:cytosolic large ribosomal subunit"/>
    <property type="evidence" value="ECO:0007669"/>
    <property type="project" value="TreeGrafter"/>
</dbReference>
<dbReference type="GO" id="GO:0003735">
    <property type="term" value="F:structural constituent of ribosome"/>
    <property type="evidence" value="ECO:0007669"/>
    <property type="project" value="InterPro"/>
</dbReference>
<dbReference type="GO" id="GO:0006412">
    <property type="term" value="P:translation"/>
    <property type="evidence" value="ECO:0007669"/>
    <property type="project" value="UniProtKB-UniRule"/>
</dbReference>
<dbReference type="FunFam" id="2.30.30.790:FF:000001">
    <property type="entry name" value="50S ribosomal protein L19"/>
    <property type="match status" value="1"/>
</dbReference>
<dbReference type="Gene3D" id="2.30.30.790">
    <property type="match status" value="1"/>
</dbReference>
<dbReference type="HAMAP" id="MF_00402">
    <property type="entry name" value="Ribosomal_bL19"/>
    <property type="match status" value="1"/>
</dbReference>
<dbReference type="InterPro" id="IPR001857">
    <property type="entry name" value="Ribosomal_bL19"/>
</dbReference>
<dbReference type="InterPro" id="IPR018257">
    <property type="entry name" value="Ribosomal_bL19_CS"/>
</dbReference>
<dbReference type="InterPro" id="IPR038657">
    <property type="entry name" value="Ribosomal_bL19_sf"/>
</dbReference>
<dbReference type="InterPro" id="IPR008991">
    <property type="entry name" value="Translation_prot_SH3-like_sf"/>
</dbReference>
<dbReference type="NCBIfam" id="TIGR01024">
    <property type="entry name" value="rplS_bact"/>
    <property type="match status" value="1"/>
</dbReference>
<dbReference type="PANTHER" id="PTHR15680:SF9">
    <property type="entry name" value="LARGE RIBOSOMAL SUBUNIT PROTEIN BL19M"/>
    <property type="match status" value="1"/>
</dbReference>
<dbReference type="PANTHER" id="PTHR15680">
    <property type="entry name" value="RIBOSOMAL PROTEIN L19"/>
    <property type="match status" value="1"/>
</dbReference>
<dbReference type="Pfam" id="PF01245">
    <property type="entry name" value="Ribosomal_L19"/>
    <property type="match status" value="1"/>
</dbReference>
<dbReference type="PIRSF" id="PIRSF002191">
    <property type="entry name" value="Ribosomal_L19"/>
    <property type="match status" value="1"/>
</dbReference>
<dbReference type="PRINTS" id="PR00061">
    <property type="entry name" value="RIBOSOMALL19"/>
</dbReference>
<dbReference type="SUPFAM" id="SSF50104">
    <property type="entry name" value="Translation proteins SH3-like domain"/>
    <property type="match status" value="1"/>
</dbReference>
<dbReference type="PROSITE" id="PS01015">
    <property type="entry name" value="RIBOSOMAL_L19"/>
    <property type="match status" value="1"/>
</dbReference>
<feature type="chain" id="PRO_1000072243" description="Large ribosomal subunit protein bL19">
    <location>
        <begin position="1"/>
        <end position="115"/>
    </location>
</feature>
<organism>
    <name type="scientific">Desulforamulus reducens (strain ATCC BAA-1160 / DSM 100696 / MI-1)</name>
    <name type="common">Desulfotomaculum reducens</name>
    <dbReference type="NCBI Taxonomy" id="349161"/>
    <lineage>
        <taxon>Bacteria</taxon>
        <taxon>Bacillati</taxon>
        <taxon>Bacillota</taxon>
        <taxon>Clostridia</taxon>
        <taxon>Eubacteriales</taxon>
        <taxon>Peptococcaceae</taxon>
        <taxon>Desulforamulus</taxon>
    </lineage>
</organism>
<sequence length="115" mass="13353">MNLIQSLEQEQIKKELPSFRPGDTIKVNYKVIEGNRERIQAFEGVVIRRRGGGLSETFTVRRISYGVGVERTFPLHAPKIDSIEVVRRGKVRRARLYYLRALRGKKARIKELSTR</sequence>
<accession>A4J664</accession>
<comment type="function">
    <text evidence="1">This protein is located at the 30S-50S ribosomal subunit interface and may play a role in the structure and function of the aminoacyl-tRNA binding site.</text>
</comment>
<comment type="similarity">
    <text evidence="1">Belongs to the bacterial ribosomal protein bL19 family.</text>
</comment>
<gene>
    <name evidence="1" type="primary">rplS</name>
    <name type="ordered locus">Dred_2050</name>
</gene>
<keyword id="KW-1185">Reference proteome</keyword>
<keyword id="KW-0687">Ribonucleoprotein</keyword>
<keyword id="KW-0689">Ribosomal protein</keyword>
<name>RL19_DESRM</name>